<proteinExistence type="inferred from homology"/>
<organism>
    <name type="scientific">Dictyostelium discoideum</name>
    <name type="common">Social amoeba</name>
    <dbReference type="NCBI Taxonomy" id="44689"/>
    <lineage>
        <taxon>Eukaryota</taxon>
        <taxon>Amoebozoa</taxon>
        <taxon>Evosea</taxon>
        <taxon>Eumycetozoa</taxon>
        <taxon>Dictyostelia</taxon>
        <taxon>Dictyosteliales</taxon>
        <taxon>Dictyosteliaceae</taxon>
        <taxon>Dictyostelium</taxon>
    </lineage>
</organism>
<feature type="chain" id="PRO_0000362045" description="Probable serine/threonine-protein kinase DDB_G0291918">
    <location>
        <begin position="1"/>
        <end position="669"/>
    </location>
</feature>
<feature type="domain" description="Protein kinase" evidence="1">
    <location>
        <begin position="13"/>
        <end position="360"/>
    </location>
</feature>
<feature type="region of interest" description="Disordered" evidence="3">
    <location>
        <begin position="396"/>
        <end position="518"/>
    </location>
</feature>
<feature type="region of interest" description="Disordered" evidence="3">
    <location>
        <begin position="530"/>
        <end position="550"/>
    </location>
</feature>
<feature type="compositionally biased region" description="Low complexity" evidence="3">
    <location>
        <begin position="396"/>
        <end position="405"/>
    </location>
</feature>
<feature type="compositionally biased region" description="Polar residues" evidence="3">
    <location>
        <begin position="406"/>
        <end position="418"/>
    </location>
</feature>
<feature type="compositionally biased region" description="Low complexity" evidence="3">
    <location>
        <begin position="419"/>
        <end position="449"/>
    </location>
</feature>
<feature type="compositionally biased region" description="Low complexity" evidence="3">
    <location>
        <begin position="457"/>
        <end position="494"/>
    </location>
</feature>
<feature type="active site" description="Proton acceptor" evidence="1 2">
    <location>
        <position position="141"/>
    </location>
</feature>
<feature type="binding site" evidence="1">
    <location>
        <begin position="19"/>
        <end position="27"/>
    </location>
    <ligand>
        <name>ATP</name>
        <dbReference type="ChEBI" id="CHEBI:30616"/>
    </ligand>
</feature>
<feature type="binding site" evidence="1">
    <location>
        <position position="42"/>
    </location>
    <ligand>
        <name>ATP</name>
        <dbReference type="ChEBI" id="CHEBI:30616"/>
    </ligand>
</feature>
<name>Y1918_DICDI</name>
<keyword id="KW-0067">ATP-binding</keyword>
<keyword id="KW-0418">Kinase</keyword>
<keyword id="KW-0547">Nucleotide-binding</keyword>
<keyword id="KW-1185">Reference proteome</keyword>
<keyword id="KW-0723">Serine/threonine-protein kinase</keyword>
<keyword id="KW-0808">Transferase</keyword>
<accession>Q54DY0</accession>
<dbReference type="EC" id="2.7.11.1"/>
<dbReference type="EMBL" id="AAFI02000186">
    <property type="protein sequence ID" value="EAL61489.1"/>
    <property type="molecule type" value="Genomic_DNA"/>
</dbReference>
<dbReference type="RefSeq" id="XP_629916.1">
    <property type="nucleotide sequence ID" value="XM_629914.1"/>
</dbReference>
<dbReference type="SMR" id="Q54DY0"/>
<dbReference type="STRING" id="44689.Q54DY0"/>
<dbReference type="GlyGen" id="Q54DY0">
    <property type="glycosylation" value="1 site"/>
</dbReference>
<dbReference type="PaxDb" id="44689-DDB0229381"/>
<dbReference type="EnsemblProtists" id="EAL61489">
    <property type="protein sequence ID" value="EAL61489"/>
    <property type="gene ID" value="DDB_G0291918"/>
</dbReference>
<dbReference type="GeneID" id="8628417"/>
<dbReference type="KEGG" id="ddi:DDB_G0291918"/>
<dbReference type="dictyBase" id="DDB_G0291918"/>
<dbReference type="VEuPathDB" id="AmoebaDB:DDB_G0291918"/>
<dbReference type="eggNOG" id="KOG0595">
    <property type="taxonomic scope" value="Eukaryota"/>
</dbReference>
<dbReference type="HOGENOM" id="CLU_410748_0_0_1"/>
<dbReference type="InParanoid" id="Q54DY0"/>
<dbReference type="OMA" id="CSHRDIK"/>
<dbReference type="PhylomeDB" id="Q54DY0"/>
<dbReference type="Reactome" id="R-DDI-2871796">
    <property type="pathway name" value="FCERI mediated MAPK activation"/>
</dbReference>
<dbReference type="PRO" id="PR:Q54DY0"/>
<dbReference type="Proteomes" id="UP000002195">
    <property type="component" value="Chromosome 6"/>
</dbReference>
<dbReference type="GO" id="GO:0005737">
    <property type="term" value="C:cytoplasm"/>
    <property type="evidence" value="ECO:0000318"/>
    <property type="project" value="GO_Central"/>
</dbReference>
<dbReference type="GO" id="GO:0005524">
    <property type="term" value="F:ATP binding"/>
    <property type="evidence" value="ECO:0007669"/>
    <property type="project" value="UniProtKB-KW"/>
</dbReference>
<dbReference type="GO" id="GO:0106310">
    <property type="term" value="F:protein serine kinase activity"/>
    <property type="evidence" value="ECO:0007669"/>
    <property type="project" value="RHEA"/>
</dbReference>
<dbReference type="GO" id="GO:0004674">
    <property type="term" value="F:protein serine/threonine kinase activity"/>
    <property type="evidence" value="ECO:0000318"/>
    <property type="project" value="GO_Central"/>
</dbReference>
<dbReference type="GO" id="GO:0010506">
    <property type="term" value="P:regulation of autophagy"/>
    <property type="evidence" value="ECO:0007669"/>
    <property type="project" value="InterPro"/>
</dbReference>
<dbReference type="Gene3D" id="1.10.510.10">
    <property type="entry name" value="Transferase(Phosphotransferase) domain 1"/>
    <property type="match status" value="2"/>
</dbReference>
<dbReference type="InterPro" id="IPR045269">
    <property type="entry name" value="Atg1-like"/>
</dbReference>
<dbReference type="InterPro" id="IPR011009">
    <property type="entry name" value="Kinase-like_dom_sf"/>
</dbReference>
<dbReference type="InterPro" id="IPR000719">
    <property type="entry name" value="Prot_kinase_dom"/>
</dbReference>
<dbReference type="InterPro" id="IPR017441">
    <property type="entry name" value="Protein_kinase_ATP_BS"/>
</dbReference>
<dbReference type="InterPro" id="IPR008271">
    <property type="entry name" value="Ser/Thr_kinase_AS"/>
</dbReference>
<dbReference type="PANTHER" id="PTHR24348">
    <property type="entry name" value="SERINE/THREONINE-PROTEIN KINASE UNC-51-RELATED"/>
    <property type="match status" value="1"/>
</dbReference>
<dbReference type="PANTHER" id="PTHR24348:SF68">
    <property type="entry name" value="SERINE_THREONINE-PROTEIN KINASE ATG1C"/>
    <property type="match status" value="1"/>
</dbReference>
<dbReference type="Pfam" id="PF00069">
    <property type="entry name" value="Pkinase"/>
    <property type="match status" value="2"/>
</dbReference>
<dbReference type="SMART" id="SM00220">
    <property type="entry name" value="S_TKc"/>
    <property type="match status" value="1"/>
</dbReference>
<dbReference type="SUPFAM" id="SSF56112">
    <property type="entry name" value="Protein kinase-like (PK-like)"/>
    <property type="match status" value="1"/>
</dbReference>
<dbReference type="PROSITE" id="PS00107">
    <property type="entry name" value="PROTEIN_KINASE_ATP"/>
    <property type="match status" value="1"/>
</dbReference>
<dbReference type="PROSITE" id="PS50011">
    <property type="entry name" value="PROTEIN_KINASE_DOM"/>
    <property type="match status" value="1"/>
</dbReference>
<dbReference type="PROSITE" id="PS00108">
    <property type="entry name" value="PROTEIN_KINASE_ST"/>
    <property type="match status" value="1"/>
</dbReference>
<protein>
    <recommendedName>
        <fullName>Probable serine/threonine-protein kinase DDB_G0291918</fullName>
        <ecNumber>2.7.11.1</ecNumber>
    </recommendedName>
</protein>
<comment type="catalytic activity">
    <reaction>
        <text>L-seryl-[protein] + ATP = O-phospho-L-seryl-[protein] + ADP + H(+)</text>
        <dbReference type="Rhea" id="RHEA:17989"/>
        <dbReference type="Rhea" id="RHEA-COMP:9863"/>
        <dbReference type="Rhea" id="RHEA-COMP:11604"/>
        <dbReference type="ChEBI" id="CHEBI:15378"/>
        <dbReference type="ChEBI" id="CHEBI:29999"/>
        <dbReference type="ChEBI" id="CHEBI:30616"/>
        <dbReference type="ChEBI" id="CHEBI:83421"/>
        <dbReference type="ChEBI" id="CHEBI:456216"/>
        <dbReference type="EC" id="2.7.11.1"/>
    </reaction>
</comment>
<comment type="catalytic activity">
    <reaction>
        <text>L-threonyl-[protein] + ATP = O-phospho-L-threonyl-[protein] + ADP + H(+)</text>
        <dbReference type="Rhea" id="RHEA:46608"/>
        <dbReference type="Rhea" id="RHEA-COMP:11060"/>
        <dbReference type="Rhea" id="RHEA-COMP:11605"/>
        <dbReference type="ChEBI" id="CHEBI:15378"/>
        <dbReference type="ChEBI" id="CHEBI:30013"/>
        <dbReference type="ChEBI" id="CHEBI:30616"/>
        <dbReference type="ChEBI" id="CHEBI:61977"/>
        <dbReference type="ChEBI" id="CHEBI:456216"/>
        <dbReference type="EC" id="2.7.11.1"/>
    </reaction>
</comment>
<comment type="similarity">
    <text evidence="1">Belongs to the protein kinase superfamily. Ser/Thr protein kinase family.</text>
</comment>
<reference key="1">
    <citation type="journal article" date="2005" name="Nature">
        <title>The genome of the social amoeba Dictyostelium discoideum.</title>
        <authorList>
            <person name="Eichinger L."/>
            <person name="Pachebat J.A."/>
            <person name="Gloeckner G."/>
            <person name="Rajandream M.A."/>
            <person name="Sucgang R."/>
            <person name="Berriman M."/>
            <person name="Song J."/>
            <person name="Olsen R."/>
            <person name="Szafranski K."/>
            <person name="Xu Q."/>
            <person name="Tunggal B."/>
            <person name="Kummerfeld S."/>
            <person name="Madera M."/>
            <person name="Konfortov B.A."/>
            <person name="Rivero F."/>
            <person name="Bankier A.T."/>
            <person name="Lehmann R."/>
            <person name="Hamlin N."/>
            <person name="Davies R."/>
            <person name="Gaudet P."/>
            <person name="Fey P."/>
            <person name="Pilcher K."/>
            <person name="Chen G."/>
            <person name="Saunders D."/>
            <person name="Sodergren E.J."/>
            <person name="Davis P."/>
            <person name="Kerhornou A."/>
            <person name="Nie X."/>
            <person name="Hall N."/>
            <person name="Anjard C."/>
            <person name="Hemphill L."/>
            <person name="Bason N."/>
            <person name="Farbrother P."/>
            <person name="Desany B."/>
            <person name="Just E."/>
            <person name="Morio T."/>
            <person name="Rost R."/>
            <person name="Churcher C.M."/>
            <person name="Cooper J."/>
            <person name="Haydock S."/>
            <person name="van Driessche N."/>
            <person name="Cronin A."/>
            <person name="Goodhead I."/>
            <person name="Muzny D.M."/>
            <person name="Mourier T."/>
            <person name="Pain A."/>
            <person name="Lu M."/>
            <person name="Harper D."/>
            <person name="Lindsay R."/>
            <person name="Hauser H."/>
            <person name="James K.D."/>
            <person name="Quiles M."/>
            <person name="Madan Babu M."/>
            <person name="Saito T."/>
            <person name="Buchrieser C."/>
            <person name="Wardroper A."/>
            <person name="Felder M."/>
            <person name="Thangavelu M."/>
            <person name="Johnson D."/>
            <person name="Knights A."/>
            <person name="Loulseged H."/>
            <person name="Mungall K.L."/>
            <person name="Oliver K."/>
            <person name="Price C."/>
            <person name="Quail M.A."/>
            <person name="Urushihara H."/>
            <person name="Hernandez J."/>
            <person name="Rabbinowitsch E."/>
            <person name="Steffen D."/>
            <person name="Sanders M."/>
            <person name="Ma J."/>
            <person name="Kohara Y."/>
            <person name="Sharp S."/>
            <person name="Simmonds M.N."/>
            <person name="Spiegler S."/>
            <person name="Tivey A."/>
            <person name="Sugano S."/>
            <person name="White B."/>
            <person name="Walker D."/>
            <person name="Woodward J.R."/>
            <person name="Winckler T."/>
            <person name="Tanaka Y."/>
            <person name="Shaulsky G."/>
            <person name="Schleicher M."/>
            <person name="Weinstock G.M."/>
            <person name="Rosenthal A."/>
            <person name="Cox E.C."/>
            <person name="Chisholm R.L."/>
            <person name="Gibbs R.A."/>
            <person name="Loomis W.F."/>
            <person name="Platzer M."/>
            <person name="Kay R.R."/>
            <person name="Williams J.G."/>
            <person name="Dear P.H."/>
            <person name="Noegel A.A."/>
            <person name="Barrell B.G."/>
            <person name="Kuspa A."/>
        </authorList>
    </citation>
    <scope>NUCLEOTIDE SEQUENCE [LARGE SCALE GENOMIC DNA]</scope>
    <source>
        <strain>AX4</strain>
    </source>
</reference>
<evidence type="ECO:0000255" key="1">
    <source>
        <dbReference type="PROSITE-ProRule" id="PRU00159"/>
    </source>
</evidence>
<evidence type="ECO:0000255" key="2">
    <source>
        <dbReference type="PROSITE-ProRule" id="PRU10027"/>
    </source>
</evidence>
<evidence type="ECO:0000256" key="3">
    <source>
        <dbReference type="SAM" id="MobiDB-lite"/>
    </source>
</evidence>
<sequence>MSNQRVLYWPETYNNIKELGRGVSGVVYKASHKKTGQIVAIKLVDMKQSKISTEQIQGEIRALLTLNPENERTHINIIKLIQCFIHKTTAIFILEYVDGGTLEDFMYSFERGMPLSLISHCLYQSVNAIEYMNSKKCSHRDIKPANILMLRNRKPKLKQQSEQQQQEDGGYIRYSGQFQLEPSSQENNNYQFDPDELPILKVTDYGYASISGNDSAEIHSTLAGSPLYMAPEIIHIILSPFLEPGTGKLSADSSEGYNPLLVDVWAIGAVAFRLITGDDLISVIFPNLNQTTVLAALVNLAKMIDNGDFQKGLDSIPNEIRKYGLVDPDIELGISFITSLLQLDPKKRLPLKETLNHPFLAKGKLSFTQTLNQHYKDNKDVLGSIVPSDISNFLNQNQQQQQQQQKSFSTSSLPQVNHNNDTNNNNNNNNNNNNNNNNNNNNNNNNNNNNEKDKDNQSNNSSSSSSSSSPPSPTISKSSPSSLSSSLSPSSSTDDLPKAMKWSSSVKPPKKSNFAPTFLSHQRSDKITLFPKLLPPPTKDAPPLETMNWRSPPVEVGDSITWTTLTQDAIFQVQFSVLTSFLKVISASNSYQFRIITSLTKVPLEIAVSNHKDTILYMYNIVKSVIAPQLISLSNAFDENSIRSVLAAILYQIGTETEQAEIANCWTLV</sequence>
<gene>
    <name type="ORF">DDB_G0291918</name>
</gene>